<name>PROB_METBF</name>
<gene>
    <name evidence="1" type="primary">proB</name>
    <name type="ordered locus">Mbar_A0481</name>
</gene>
<accession>Q46F79</accession>
<evidence type="ECO:0000255" key="1">
    <source>
        <dbReference type="HAMAP-Rule" id="MF_00456"/>
    </source>
</evidence>
<evidence type="ECO:0000305" key="2"/>
<comment type="function">
    <text evidence="1">Catalyzes the transfer of a phosphate group to glutamate to form L-glutamate 5-phosphate.</text>
</comment>
<comment type="catalytic activity">
    <reaction evidence="1">
        <text>L-glutamate + ATP = L-glutamyl 5-phosphate + ADP</text>
        <dbReference type="Rhea" id="RHEA:14877"/>
        <dbReference type="ChEBI" id="CHEBI:29985"/>
        <dbReference type="ChEBI" id="CHEBI:30616"/>
        <dbReference type="ChEBI" id="CHEBI:58274"/>
        <dbReference type="ChEBI" id="CHEBI:456216"/>
        <dbReference type="EC" id="2.7.2.11"/>
    </reaction>
</comment>
<comment type="pathway">
    <text evidence="1">Amino-acid biosynthesis; L-proline biosynthesis; L-glutamate 5-semialdehyde from L-glutamate: step 1/2.</text>
</comment>
<comment type="subcellular location">
    <subcellularLocation>
        <location evidence="1">Cytoplasm</location>
    </subcellularLocation>
</comment>
<comment type="similarity">
    <text evidence="1">Belongs to the glutamate 5-kinase family.</text>
</comment>
<comment type="sequence caution" evidence="2">
    <conflict type="erroneous initiation">
        <sequence resource="EMBL-CDS" id="AAZ69463"/>
    </conflict>
</comment>
<organism>
    <name type="scientific">Methanosarcina barkeri (strain Fusaro / DSM 804)</name>
    <dbReference type="NCBI Taxonomy" id="269797"/>
    <lineage>
        <taxon>Archaea</taxon>
        <taxon>Methanobacteriati</taxon>
        <taxon>Methanobacteriota</taxon>
        <taxon>Stenosarchaea group</taxon>
        <taxon>Methanomicrobia</taxon>
        <taxon>Methanosarcinales</taxon>
        <taxon>Methanosarcinaceae</taxon>
        <taxon>Methanosarcina</taxon>
    </lineage>
</organism>
<protein>
    <recommendedName>
        <fullName evidence="1">Glutamate 5-kinase</fullName>
        <ecNumber evidence="1">2.7.2.11</ecNumber>
    </recommendedName>
    <alternativeName>
        <fullName evidence="1">Gamma-glutamyl kinase</fullName>
        <shortName evidence="1">GK</shortName>
    </alternativeName>
</protein>
<keyword id="KW-0028">Amino-acid biosynthesis</keyword>
<keyword id="KW-0067">ATP-binding</keyword>
<keyword id="KW-0963">Cytoplasm</keyword>
<keyword id="KW-0418">Kinase</keyword>
<keyword id="KW-0547">Nucleotide-binding</keyword>
<keyword id="KW-0641">Proline biosynthesis</keyword>
<keyword id="KW-0808">Transferase</keyword>
<sequence length="383" mass="41888">MTDRNEFLNDINKIVIKIGTSSLTKQNCDSTKENCSIDPTFIENIAAQVSELRKLGKEVIVVSSGAIGVGLYELGIAPKPREIPIRQAAAAVGQSILMQYWSEAFSKHGIKVAQILLTYEFYSDRVSYLNLRNSISTLLEYGVVPIINENDCTCTNEIEAIFGDNDKLSAMVASKIDADLLIILSDIDGLFDKNPKIHEDARLISLVEKITPEIESYGGDPTSFKGVGGMRTKIKAAKICSMAGCYVLIANSEIEDVLLKVLSGKEIGTLFLAERHIQKNRARWIILSRASGTIRVDAGAKAAVLGKNSLLSAGVVDVEGNFDRGDVVRLECEGRVFAKGITDYTSEELMKIKGAHTDEIEGILGYNNYSNVIKKENIGIMEN</sequence>
<dbReference type="EC" id="2.7.2.11" evidence="1"/>
<dbReference type="EMBL" id="CP000099">
    <property type="protein sequence ID" value="AAZ69463.1"/>
    <property type="status" value="ALT_INIT"/>
    <property type="molecule type" value="Genomic_DNA"/>
</dbReference>
<dbReference type="SMR" id="Q46F79"/>
<dbReference type="STRING" id="269797.Mbar_A0481"/>
<dbReference type="PaxDb" id="269797-Mbar_A0481"/>
<dbReference type="KEGG" id="mba:Mbar_A0481"/>
<dbReference type="eggNOG" id="arCOG00864">
    <property type="taxonomic scope" value="Archaea"/>
</dbReference>
<dbReference type="HOGENOM" id="CLU_025400_2_0_2"/>
<dbReference type="OrthoDB" id="142069at2157"/>
<dbReference type="UniPathway" id="UPA00098">
    <property type="reaction ID" value="UER00359"/>
</dbReference>
<dbReference type="GO" id="GO:0005829">
    <property type="term" value="C:cytosol"/>
    <property type="evidence" value="ECO:0007669"/>
    <property type="project" value="TreeGrafter"/>
</dbReference>
<dbReference type="GO" id="GO:0005524">
    <property type="term" value="F:ATP binding"/>
    <property type="evidence" value="ECO:0007669"/>
    <property type="project" value="UniProtKB-KW"/>
</dbReference>
<dbReference type="GO" id="GO:0004349">
    <property type="term" value="F:glutamate 5-kinase activity"/>
    <property type="evidence" value="ECO:0007669"/>
    <property type="project" value="UniProtKB-UniRule"/>
</dbReference>
<dbReference type="GO" id="GO:0003723">
    <property type="term" value="F:RNA binding"/>
    <property type="evidence" value="ECO:0007669"/>
    <property type="project" value="InterPro"/>
</dbReference>
<dbReference type="GO" id="GO:0055129">
    <property type="term" value="P:L-proline biosynthetic process"/>
    <property type="evidence" value="ECO:0007669"/>
    <property type="project" value="UniProtKB-UniRule"/>
</dbReference>
<dbReference type="CDD" id="cd04242">
    <property type="entry name" value="AAK_G5K_ProB"/>
    <property type="match status" value="1"/>
</dbReference>
<dbReference type="CDD" id="cd21157">
    <property type="entry name" value="PUA_G5K"/>
    <property type="match status" value="1"/>
</dbReference>
<dbReference type="FunFam" id="3.40.1160.10:FF:000018">
    <property type="entry name" value="Glutamate 5-kinase"/>
    <property type="match status" value="1"/>
</dbReference>
<dbReference type="Gene3D" id="3.40.1160.10">
    <property type="entry name" value="Acetylglutamate kinase-like"/>
    <property type="match status" value="1"/>
</dbReference>
<dbReference type="Gene3D" id="2.30.130.10">
    <property type="entry name" value="PUA domain"/>
    <property type="match status" value="1"/>
</dbReference>
<dbReference type="HAMAP" id="MF_00456">
    <property type="entry name" value="ProB"/>
    <property type="match status" value="1"/>
</dbReference>
<dbReference type="InterPro" id="IPR036393">
    <property type="entry name" value="AceGlu_kinase-like_sf"/>
</dbReference>
<dbReference type="InterPro" id="IPR001048">
    <property type="entry name" value="Asp/Glu/Uridylate_kinase"/>
</dbReference>
<dbReference type="InterPro" id="IPR041739">
    <property type="entry name" value="G5K_ProB"/>
</dbReference>
<dbReference type="InterPro" id="IPR001057">
    <property type="entry name" value="Glu/AcGlu_kinase"/>
</dbReference>
<dbReference type="InterPro" id="IPR011529">
    <property type="entry name" value="Glu_5kinase"/>
</dbReference>
<dbReference type="InterPro" id="IPR005715">
    <property type="entry name" value="Glu_5kinase/COase_Synthase"/>
</dbReference>
<dbReference type="InterPro" id="IPR019797">
    <property type="entry name" value="Glutamate_5-kinase_CS"/>
</dbReference>
<dbReference type="InterPro" id="IPR002478">
    <property type="entry name" value="PUA"/>
</dbReference>
<dbReference type="InterPro" id="IPR015947">
    <property type="entry name" value="PUA-like_sf"/>
</dbReference>
<dbReference type="InterPro" id="IPR036974">
    <property type="entry name" value="PUA_sf"/>
</dbReference>
<dbReference type="NCBIfam" id="TIGR01027">
    <property type="entry name" value="proB"/>
    <property type="match status" value="1"/>
</dbReference>
<dbReference type="PANTHER" id="PTHR43654">
    <property type="entry name" value="GLUTAMATE 5-KINASE"/>
    <property type="match status" value="1"/>
</dbReference>
<dbReference type="PANTHER" id="PTHR43654:SF3">
    <property type="entry name" value="GLUTAMATE 5-KINASE"/>
    <property type="match status" value="1"/>
</dbReference>
<dbReference type="Pfam" id="PF00696">
    <property type="entry name" value="AA_kinase"/>
    <property type="match status" value="1"/>
</dbReference>
<dbReference type="Pfam" id="PF01472">
    <property type="entry name" value="PUA"/>
    <property type="match status" value="1"/>
</dbReference>
<dbReference type="PIRSF" id="PIRSF000729">
    <property type="entry name" value="GK"/>
    <property type="match status" value="1"/>
</dbReference>
<dbReference type="PRINTS" id="PR00474">
    <property type="entry name" value="GLU5KINASE"/>
</dbReference>
<dbReference type="SMART" id="SM00359">
    <property type="entry name" value="PUA"/>
    <property type="match status" value="1"/>
</dbReference>
<dbReference type="SUPFAM" id="SSF53633">
    <property type="entry name" value="Carbamate kinase-like"/>
    <property type="match status" value="1"/>
</dbReference>
<dbReference type="SUPFAM" id="SSF88697">
    <property type="entry name" value="PUA domain-like"/>
    <property type="match status" value="1"/>
</dbReference>
<dbReference type="PROSITE" id="PS00902">
    <property type="entry name" value="GLUTAMATE_5_KINASE"/>
    <property type="match status" value="1"/>
</dbReference>
<dbReference type="PROSITE" id="PS50890">
    <property type="entry name" value="PUA"/>
    <property type="match status" value="1"/>
</dbReference>
<feature type="chain" id="PRO_0000230076" description="Glutamate 5-kinase">
    <location>
        <begin position="1"/>
        <end position="383"/>
    </location>
</feature>
<feature type="domain" description="PUA" evidence="1">
    <location>
        <begin position="291"/>
        <end position="367"/>
    </location>
</feature>
<feature type="binding site" evidence="1">
    <location>
        <position position="17"/>
    </location>
    <ligand>
        <name>ATP</name>
        <dbReference type="ChEBI" id="CHEBI:30616"/>
    </ligand>
</feature>
<feature type="binding site" evidence="1">
    <location>
        <position position="64"/>
    </location>
    <ligand>
        <name>substrate</name>
    </ligand>
</feature>
<feature type="binding site" evidence="1">
    <location>
        <position position="151"/>
    </location>
    <ligand>
        <name>substrate</name>
    </ligand>
</feature>
<feature type="binding site" evidence="1">
    <location>
        <position position="165"/>
    </location>
    <ligand>
        <name>substrate</name>
    </ligand>
</feature>
<feature type="binding site" evidence="1">
    <location>
        <begin position="185"/>
        <end position="186"/>
    </location>
    <ligand>
        <name>ATP</name>
        <dbReference type="ChEBI" id="CHEBI:30616"/>
    </ligand>
</feature>
<proteinExistence type="inferred from homology"/>
<reference key="1">
    <citation type="journal article" date="2006" name="J. Bacteriol.">
        <title>The Methanosarcina barkeri genome: comparative analysis with Methanosarcina acetivorans and Methanosarcina mazei reveals extensive rearrangement within methanosarcinal genomes.</title>
        <authorList>
            <person name="Maeder D.L."/>
            <person name="Anderson I."/>
            <person name="Brettin T.S."/>
            <person name="Bruce D.C."/>
            <person name="Gilna P."/>
            <person name="Han C.S."/>
            <person name="Lapidus A."/>
            <person name="Metcalf W.W."/>
            <person name="Saunders E."/>
            <person name="Tapia R."/>
            <person name="Sowers K.R."/>
        </authorList>
    </citation>
    <scope>NUCLEOTIDE SEQUENCE [LARGE SCALE GENOMIC DNA]</scope>
    <source>
        <strain>Fusaro / DSM 804</strain>
    </source>
</reference>